<keyword id="KW-1185">Reference proteome</keyword>
<proteinExistence type="predicted"/>
<reference key="1">
    <citation type="journal article" date="2001" name="Nature">
        <title>Genome sequence of enterohaemorrhagic Escherichia coli O157:H7.</title>
        <authorList>
            <person name="Perna N.T."/>
            <person name="Plunkett G. III"/>
            <person name="Burland V."/>
            <person name="Mau B."/>
            <person name="Glasner J.D."/>
            <person name="Rose D.J."/>
            <person name="Mayhew G.F."/>
            <person name="Evans P.S."/>
            <person name="Gregor J."/>
            <person name="Kirkpatrick H.A."/>
            <person name="Posfai G."/>
            <person name="Hackett J."/>
            <person name="Klink S."/>
            <person name="Boutin A."/>
            <person name="Shao Y."/>
            <person name="Miller L."/>
            <person name="Grotbeck E.J."/>
            <person name="Davis N.W."/>
            <person name="Lim A."/>
            <person name="Dimalanta E.T."/>
            <person name="Potamousis K."/>
            <person name="Apodaca J."/>
            <person name="Anantharaman T.S."/>
            <person name="Lin J."/>
            <person name="Yen G."/>
            <person name="Schwartz D.C."/>
            <person name="Welch R.A."/>
            <person name="Blattner F.R."/>
        </authorList>
    </citation>
    <scope>NUCLEOTIDE SEQUENCE [LARGE SCALE GENOMIC DNA]</scope>
    <source>
        <strain>O157:H7 / EDL933 / ATCC 700927 / EHEC</strain>
    </source>
</reference>
<reference key="2">
    <citation type="journal article" date="2001" name="DNA Res.">
        <title>Complete genome sequence of enterohemorrhagic Escherichia coli O157:H7 and genomic comparison with a laboratory strain K-12.</title>
        <authorList>
            <person name="Hayashi T."/>
            <person name="Makino K."/>
            <person name="Ohnishi M."/>
            <person name="Kurokawa K."/>
            <person name="Ishii K."/>
            <person name="Yokoyama K."/>
            <person name="Han C.-G."/>
            <person name="Ohtsubo E."/>
            <person name="Nakayama K."/>
            <person name="Murata T."/>
            <person name="Tanaka M."/>
            <person name="Tobe T."/>
            <person name="Iida T."/>
            <person name="Takami H."/>
            <person name="Honda T."/>
            <person name="Sasakawa C."/>
            <person name="Ogasawara N."/>
            <person name="Yasunaga T."/>
            <person name="Kuhara S."/>
            <person name="Shiba T."/>
            <person name="Hattori M."/>
            <person name="Shinagawa H."/>
        </authorList>
    </citation>
    <scope>NUCLEOTIDE SEQUENCE [LARGE SCALE GENOMIC DNA]</scope>
    <source>
        <strain>O157:H7 / Sakai / RIMD 0509952 / EHEC</strain>
    </source>
</reference>
<dbReference type="EMBL" id="AE005174">
    <property type="protein sequence ID" value="AAG56786.1"/>
    <property type="molecule type" value="Genomic_DNA"/>
</dbReference>
<dbReference type="EMBL" id="BA000007">
    <property type="protein sequence ID" value="BAB35929.1"/>
    <property type="molecule type" value="Genomic_DNA"/>
</dbReference>
<dbReference type="PIR" id="B90942">
    <property type="entry name" value="B90942"/>
</dbReference>
<dbReference type="PIR" id="F85790">
    <property type="entry name" value="F85790"/>
</dbReference>
<dbReference type="RefSeq" id="NP_310533.1">
    <property type="nucleotide sequence ID" value="NC_002695.1"/>
</dbReference>
<dbReference type="RefSeq" id="WP_000939317.1">
    <property type="nucleotide sequence ID" value="NZ_VOAI01000010.1"/>
</dbReference>
<dbReference type="SMR" id="P64489"/>
<dbReference type="STRING" id="155864.Z2839"/>
<dbReference type="GeneID" id="75202623"/>
<dbReference type="GeneID" id="914119"/>
<dbReference type="KEGG" id="ece:Z2839"/>
<dbReference type="KEGG" id="ecs:ECs_2506"/>
<dbReference type="PATRIC" id="fig|386585.9.peg.2625"/>
<dbReference type="eggNOG" id="COG3615">
    <property type="taxonomic scope" value="Bacteria"/>
</dbReference>
<dbReference type="HOGENOM" id="CLU_147375_1_0_6"/>
<dbReference type="OMA" id="ASIWKRH"/>
<dbReference type="Proteomes" id="UP000000558">
    <property type="component" value="Chromosome"/>
</dbReference>
<dbReference type="Proteomes" id="UP000002519">
    <property type="component" value="Chromosome"/>
</dbReference>
<dbReference type="Gene3D" id="2.60.120.10">
    <property type="entry name" value="Jelly Rolls"/>
    <property type="match status" value="1"/>
</dbReference>
<dbReference type="InterPro" id="IPR015392">
    <property type="entry name" value="DUF1971"/>
</dbReference>
<dbReference type="InterPro" id="IPR014710">
    <property type="entry name" value="RmlC-like_jellyroll"/>
</dbReference>
<dbReference type="InterPro" id="IPR014510">
    <property type="entry name" value="Tellurite-R_YeaR"/>
</dbReference>
<dbReference type="Pfam" id="PF09313">
    <property type="entry name" value="DUF1971"/>
    <property type="match status" value="1"/>
</dbReference>
<dbReference type="PIRSF" id="PIRSF020632">
    <property type="entry name" value="YeaR"/>
    <property type="match status" value="1"/>
</dbReference>
<dbReference type="SUPFAM" id="SSF51197">
    <property type="entry name" value="Clavaminate synthase-like"/>
    <property type="match status" value="1"/>
</dbReference>
<protein>
    <recommendedName>
        <fullName>Uncharacterized protein YeaR</fullName>
    </recommendedName>
</protein>
<feature type="chain" id="PRO_0000169029" description="Uncharacterized protein YeaR">
    <location>
        <begin position="1"/>
        <end position="119"/>
    </location>
</feature>
<sequence>MLQIPQNYIHTRSTPFWNKQTAPAGIFERHLDKGTRPGVYPRLSVMHGAVKYLGYADEHSAEPDQVILIEAGQFAVFPPEKWHNIEAMTDDTYFNIDFFVAPEVLMEGAQQRKVIHNGK</sequence>
<gene>
    <name type="primary">yeaR</name>
    <name type="ordered locus">Z2839</name>
    <name type="ordered locus">ECs2506</name>
</gene>
<name>YEAR_ECO57</name>
<accession>P64489</accession>
<accession>P76248</accession>
<organism>
    <name type="scientific">Escherichia coli O157:H7</name>
    <dbReference type="NCBI Taxonomy" id="83334"/>
    <lineage>
        <taxon>Bacteria</taxon>
        <taxon>Pseudomonadati</taxon>
        <taxon>Pseudomonadota</taxon>
        <taxon>Gammaproteobacteria</taxon>
        <taxon>Enterobacterales</taxon>
        <taxon>Enterobacteriaceae</taxon>
        <taxon>Escherichia</taxon>
    </lineage>
</organism>